<organism>
    <name type="scientific">Arabidopsis thaliana</name>
    <name type="common">Mouse-ear cress</name>
    <dbReference type="NCBI Taxonomy" id="3702"/>
    <lineage>
        <taxon>Eukaryota</taxon>
        <taxon>Viridiplantae</taxon>
        <taxon>Streptophyta</taxon>
        <taxon>Embryophyta</taxon>
        <taxon>Tracheophyta</taxon>
        <taxon>Spermatophyta</taxon>
        <taxon>Magnoliopsida</taxon>
        <taxon>eudicotyledons</taxon>
        <taxon>Gunneridae</taxon>
        <taxon>Pentapetalae</taxon>
        <taxon>rosids</taxon>
        <taxon>malvids</taxon>
        <taxon>Brassicales</taxon>
        <taxon>Brassicaceae</taxon>
        <taxon>Camelineae</taxon>
        <taxon>Arabidopsis</taxon>
    </lineage>
</organism>
<dbReference type="EMBL" id="AB025628">
    <property type="protein sequence ID" value="BAB09081.1"/>
    <property type="molecule type" value="Genomic_DNA"/>
</dbReference>
<dbReference type="EMBL" id="CP002688">
    <property type="protein sequence ID" value="AED95531.1"/>
    <property type="molecule type" value="Genomic_DNA"/>
</dbReference>
<dbReference type="EMBL" id="AY072354">
    <property type="protein sequence ID" value="AAL62346.1"/>
    <property type="molecule type" value="mRNA"/>
</dbReference>
<dbReference type="EMBL" id="BT006535">
    <property type="protein sequence ID" value="AAP21343.1"/>
    <property type="molecule type" value="mRNA"/>
</dbReference>
<dbReference type="EMBL" id="Z17675">
    <property type="protein sequence ID" value="CAA79032.1"/>
    <property type="molecule type" value="mRNA"/>
</dbReference>
<dbReference type="EMBL" id="AY087102">
    <property type="protein sequence ID" value="AAM64661.1"/>
    <property type="molecule type" value="mRNA"/>
</dbReference>
<dbReference type="RefSeq" id="NP_199566.1">
    <property type="nucleotide sequence ID" value="NM_124128.2"/>
</dbReference>
<dbReference type="SMR" id="Q41916"/>
<dbReference type="FunCoup" id="Q41916">
    <property type="interactions" value="1"/>
</dbReference>
<dbReference type="STRING" id="3702.Q41916"/>
<dbReference type="MEROPS" id="I25.033"/>
<dbReference type="GlyCosmos" id="Q41916">
    <property type="glycosylation" value="2 sites, No reported glycans"/>
</dbReference>
<dbReference type="GlyGen" id="Q41916">
    <property type="glycosylation" value="2 sites"/>
</dbReference>
<dbReference type="PaxDb" id="3702-AT5G47550.1"/>
<dbReference type="ProteomicsDB" id="222752"/>
<dbReference type="EnsemblPlants" id="AT5G47550.1">
    <property type="protein sequence ID" value="AT5G47550.1"/>
    <property type="gene ID" value="AT5G47550"/>
</dbReference>
<dbReference type="GeneID" id="834805"/>
<dbReference type="Gramene" id="AT5G47550.1">
    <property type="protein sequence ID" value="AT5G47550.1"/>
    <property type="gene ID" value="AT5G47550"/>
</dbReference>
<dbReference type="KEGG" id="ath:AT5G47550"/>
<dbReference type="Araport" id="AT5G47550"/>
<dbReference type="TAIR" id="AT5G47550">
    <property type="gene designation" value="CYS5"/>
</dbReference>
<dbReference type="eggNOG" id="ENOG502S46Q">
    <property type="taxonomic scope" value="Eukaryota"/>
</dbReference>
<dbReference type="HOGENOM" id="CLU_113093_5_0_1"/>
<dbReference type="InParanoid" id="Q41916"/>
<dbReference type="OMA" id="KFAITEH"/>
<dbReference type="PhylomeDB" id="Q41916"/>
<dbReference type="PRO" id="PR:Q41916"/>
<dbReference type="Proteomes" id="UP000006548">
    <property type="component" value="Chromosome 5"/>
</dbReference>
<dbReference type="ExpressionAtlas" id="Q41916">
    <property type="expression patterns" value="baseline and differential"/>
</dbReference>
<dbReference type="GO" id="GO:0005576">
    <property type="term" value="C:extracellular region"/>
    <property type="evidence" value="ECO:0007669"/>
    <property type="project" value="UniProtKB-SubCell"/>
</dbReference>
<dbReference type="GO" id="GO:0004869">
    <property type="term" value="F:cysteine-type endopeptidase inhibitor activity"/>
    <property type="evidence" value="ECO:0007669"/>
    <property type="project" value="UniProtKB-KW"/>
</dbReference>
<dbReference type="GO" id="GO:0034605">
    <property type="term" value="P:cellular response to heat"/>
    <property type="evidence" value="ECO:0000315"/>
    <property type="project" value="TAIR"/>
</dbReference>
<dbReference type="GO" id="GO:0006952">
    <property type="term" value="P:defense response"/>
    <property type="evidence" value="ECO:0007669"/>
    <property type="project" value="UniProtKB-KW"/>
</dbReference>
<dbReference type="GO" id="GO:0010030">
    <property type="term" value="P:positive regulation of seed germination"/>
    <property type="evidence" value="ECO:0000315"/>
    <property type="project" value="TAIR"/>
</dbReference>
<dbReference type="CDD" id="cd00042">
    <property type="entry name" value="CY"/>
    <property type="match status" value="1"/>
</dbReference>
<dbReference type="FunFam" id="3.10.450.10:FF:000035">
    <property type="entry name" value="Cysteine proteinase inhibitor 1"/>
    <property type="match status" value="1"/>
</dbReference>
<dbReference type="Gene3D" id="3.10.450.10">
    <property type="match status" value="1"/>
</dbReference>
<dbReference type="InterPro" id="IPR000010">
    <property type="entry name" value="Cystatin_dom"/>
</dbReference>
<dbReference type="InterPro" id="IPR046350">
    <property type="entry name" value="Cystatin_sf"/>
</dbReference>
<dbReference type="PANTHER" id="PTHR47364">
    <property type="entry name" value="CYSTEINE PROTEINASE INHIBITOR 5"/>
    <property type="match status" value="1"/>
</dbReference>
<dbReference type="PANTHER" id="PTHR47364:SF2">
    <property type="entry name" value="CYSTEINE PROTEINASE INHIBITOR 5"/>
    <property type="match status" value="1"/>
</dbReference>
<dbReference type="Pfam" id="PF16845">
    <property type="entry name" value="SQAPI"/>
    <property type="match status" value="1"/>
</dbReference>
<dbReference type="SMART" id="SM00043">
    <property type="entry name" value="CY"/>
    <property type="match status" value="1"/>
</dbReference>
<dbReference type="SUPFAM" id="SSF54403">
    <property type="entry name" value="Cystatin/monellin"/>
    <property type="match status" value="1"/>
</dbReference>
<sequence>MTSKVVFLLLLSLVVVLLPLYASAAARVGGWSPISNVTDPQVVEIGEFAVSEYNKRSESGLKFETVVSGETQVVSGTNYRLKVAANDGDGVSKNYLAIVWDKPWMKFRNLTSFEPANNGRFL</sequence>
<gene>
    <name type="primary">CYS5</name>
    <name type="ordered locus">At5g47550</name>
    <name type="ORF">MNJ7.14</name>
</gene>
<comment type="function">
    <text evidence="1">Specific inhibitor of cysteine proteinases. Probably involved in the regulation of endogenous processes and in defense against pests and pathogens (By similarity).</text>
</comment>
<comment type="subcellular location">
    <subcellularLocation>
        <location evidence="3">Secreted</location>
    </subcellularLocation>
</comment>
<comment type="similarity">
    <text evidence="3">Belongs to the cystatin family. Phytocystatin subfamily.</text>
</comment>
<accession>Q41916</accession>
<accession>Q8LBN6</accession>
<accession>Q9FGK2</accession>
<reference key="1">
    <citation type="submission" date="1999-04" db="EMBL/GenBank/DDBJ databases">
        <title>Structural analysis of Arabidopsis thaliana chromosome 5. XI.</title>
        <authorList>
            <person name="Kaneko T."/>
            <person name="Katoh T."/>
            <person name="Asamizu E."/>
            <person name="Sato S."/>
            <person name="Nakamura Y."/>
            <person name="Kotani H."/>
            <person name="Tabata S."/>
        </authorList>
    </citation>
    <scope>NUCLEOTIDE SEQUENCE [LARGE SCALE GENOMIC DNA]</scope>
    <source>
        <strain>cv. Columbia</strain>
    </source>
</reference>
<reference key="2">
    <citation type="journal article" date="2017" name="Plant J.">
        <title>Araport11: a complete reannotation of the Arabidopsis thaliana reference genome.</title>
        <authorList>
            <person name="Cheng C.Y."/>
            <person name="Krishnakumar V."/>
            <person name="Chan A.P."/>
            <person name="Thibaud-Nissen F."/>
            <person name="Schobel S."/>
            <person name="Town C.D."/>
        </authorList>
    </citation>
    <scope>GENOME REANNOTATION</scope>
    <source>
        <strain>cv. Columbia</strain>
    </source>
</reference>
<reference key="3">
    <citation type="journal article" date="2003" name="Science">
        <title>Empirical analysis of transcriptional activity in the Arabidopsis genome.</title>
        <authorList>
            <person name="Yamada K."/>
            <person name="Lim J."/>
            <person name="Dale J.M."/>
            <person name="Chen H."/>
            <person name="Shinn P."/>
            <person name="Palm C.J."/>
            <person name="Southwick A.M."/>
            <person name="Wu H.C."/>
            <person name="Kim C.J."/>
            <person name="Nguyen M."/>
            <person name="Pham P.K."/>
            <person name="Cheuk R.F."/>
            <person name="Karlin-Newmann G."/>
            <person name="Liu S.X."/>
            <person name="Lam B."/>
            <person name="Sakano H."/>
            <person name="Wu T."/>
            <person name="Yu G."/>
            <person name="Miranda M."/>
            <person name="Quach H.L."/>
            <person name="Tripp M."/>
            <person name="Chang C.H."/>
            <person name="Lee J.M."/>
            <person name="Toriumi M.J."/>
            <person name="Chan M.M."/>
            <person name="Tang C.C."/>
            <person name="Onodera C.S."/>
            <person name="Deng J.M."/>
            <person name="Akiyama K."/>
            <person name="Ansari Y."/>
            <person name="Arakawa T."/>
            <person name="Banh J."/>
            <person name="Banno F."/>
            <person name="Bowser L."/>
            <person name="Brooks S.Y."/>
            <person name="Carninci P."/>
            <person name="Chao Q."/>
            <person name="Choy N."/>
            <person name="Enju A."/>
            <person name="Goldsmith A.D."/>
            <person name="Gurjal M."/>
            <person name="Hansen N.F."/>
            <person name="Hayashizaki Y."/>
            <person name="Johnson-Hopson C."/>
            <person name="Hsuan V.W."/>
            <person name="Iida K."/>
            <person name="Karnes M."/>
            <person name="Khan S."/>
            <person name="Koesema E."/>
            <person name="Ishida J."/>
            <person name="Jiang P.X."/>
            <person name="Jones T."/>
            <person name="Kawai J."/>
            <person name="Kamiya A."/>
            <person name="Meyers C."/>
            <person name="Nakajima M."/>
            <person name="Narusaka M."/>
            <person name="Seki M."/>
            <person name="Sakurai T."/>
            <person name="Satou M."/>
            <person name="Tamse R."/>
            <person name="Vaysberg M."/>
            <person name="Wallender E.K."/>
            <person name="Wong C."/>
            <person name="Yamamura Y."/>
            <person name="Yuan S."/>
            <person name="Shinozaki K."/>
            <person name="Davis R.W."/>
            <person name="Theologis A."/>
            <person name="Ecker J.R."/>
        </authorList>
    </citation>
    <scope>NUCLEOTIDE SEQUENCE [LARGE SCALE MRNA]</scope>
    <source>
        <strain>cv. Columbia</strain>
    </source>
</reference>
<reference key="4">
    <citation type="journal article" date="1993" name="Plant J.">
        <title>An inventory of 1152 expressed sequence tags obtained by partial sequencing of cDNAs from Arabidopsis thaliana.</title>
        <authorList>
            <person name="Hoefte H."/>
            <person name="Desprez T."/>
            <person name="Amselem J."/>
            <person name="Chiapello H."/>
            <person name="Rouze P."/>
            <person name="Caboche M."/>
            <person name="Moisan A."/>
            <person name="Jourjon M.-F."/>
            <person name="Charpenteau J.-L."/>
            <person name="Berthomieu P."/>
            <person name="Guerrier D."/>
            <person name="Giraudat J."/>
            <person name="Quigley F."/>
            <person name="Thomas F."/>
            <person name="Yu D.-Y."/>
            <person name="Mache R."/>
            <person name="Raynal M."/>
            <person name="Cooke R."/>
            <person name="Grellet F."/>
            <person name="Delseny M."/>
            <person name="Parmentier Y."/>
            <person name="de Marcillac G."/>
            <person name="Gigot C."/>
            <person name="Fleck J."/>
            <person name="Philipps G."/>
            <person name="Axelos M."/>
            <person name="Bardet C."/>
            <person name="Tremousaygue D."/>
            <person name="Lescure B."/>
        </authorList>
    </citation>
    <scope>NUCLEOTIDE SEQUENCE [LARGE SCALE MRNA]</scope>
    <source>
        <strain>cv. Columbia</strain>
    </source>
</reference>
<reference key="5">
    <citation type="submission" date="2002-03" db="EMBL/GenBank/DDBJ databases">
        <title>Full-length cDNA from Arabidopsis thaliana.</title>
        <authorList>
            <person name="Brover V.V."/>
            <person name="Troukhan M.E."/>
            <person name="Alexandrov N.A."/>
            <person name="Lu Y.-P."/>
            <person name="Flavell R.B."/>
            <person name="Feldmann K.A."/>
        </authorList>
    </citation>
    <scope>NUCLEOTIDE SEQUENCE [LARGE SCALE MRNA]</scope>
</reference>
<reference key="6">
    <citation type="journal article" date="2005" name="Mol. Genet. Genomics">
        <title>Comparative phylogenetic analysis of cystatin gene families from arabidopsis, rice and barley.</title>
        <authorList>
            <person name="Martinez M."/>
            <person name="Abraham Z."/>
            <person name="Carbonero P."/>
            <person name="Diaz I."/>
        </authorList>
    </citation>
    <scope>GENE FAMILY</scope>
</reference>
<evidence type="ECO:0000250" key="1"/>
<evidence type="ECO:0000255" key="2"/>
<evidence type="ECO:0000305" key="3"/>
<feature type="signal peptide" evidence="2">
    <location>
        <begin position="1"/>
        <end position="26"/>
    </location>
</feature>
<feature type="chain" id="PRO_0000277497" description="Cysteine proteinase inhibitor 5">
    <location>
        <begin position="27"/>
        <end position="122"/>
    </location>
</feature>
<feature type="domain" description="Cystatin">
    <location>
        <begin position="29"/>
        <end position="117"/>
    </location>
</feature>
<feature type="short sequence motif" description="Secondary area of contact" evidence="1">
    <location>
        <begin position="72"/>
        <end position="76"/>
    </location>
</feature>
<feature type="site" description="Reactive site" evidence="1">
    <location>
        <position position="29"/>
    </location>
</feature>
<feature type="glycosylation site" description="N-linked (GlcNAc...) asparagine" evidence="2">
    <location>
        <position position="36"/>
    </location>
</feature>
<feature type="glycosylation site" description="N-linked (GlcNAc...) asparagine" evidence="2">
    <location>
        <position position="109"/>
    </location>
</feature>
<feature type="sequence conflict" description="In Ref. 5; AAM64661." evidence="3" ref="5">
    <original>V</original>
    <variation>L</variation>
    <location>
        <position position="16"/>
    </location>
</feature>
<feature type="sequence conflict" description="In Ref. 4; CAA79032." evidence="3" ref="4">
    <original>D</original>
    <variation>V</variation>
    <location>
        <position position="101"/>
    </location>
</feature>
<keyword id="KW-0325">Glycoprotein</keyword>
<keyword id="KW-0611">Plant defense</keyword>
<keyword id="KW-0646">Protease inhibitor</keyword>
<keyword id="KW-1185">Reference proteome</keyword>
<keyword id="KW-0964">Secreted</keyword>
<keyword id="KW-0732">Signal</keyword>
<keyword id="KW-0789">Thiol protease inhibitor</keyword>
<name>CYT5_ARATH</name>
<proteinExistence type="evidence at transcript level"/>
<protein>
    <recommendedName>
        <fullName>Cysteine proteinase inhibitor 5</fullName>
        <shortName>AtCYS-5</shortName>
    </recommendedName>
</protein>